<reference key="1">
    <citation type="journal article" date="2002" name="Proc. Natl. Acad. Sci. U.S.A.">
        <title>Genome sequence and comparative microarray analysis of serotype M18 group A Streptococcus strains associated with acute rheumatic fever outbreaks.</title>
        <authorList>
            <person name="Smoot J.C."/>
            <person name="Barbian K.D."/>
            <person name="Van Gompel J.J."/>
            <person name="Smoot L.M."/>
            <person name="Chaussee M.S."/>
            <person name="Sylva G.L."/>
            <person name="Sturdevant D.E."/>
            <person name="Ricklefs S.M."/>
            <person name="Porcella S.F."/>
            <person name="Parkins L.D."/>
            <person name="Beres S.B."/>
            <person name="Campbell D.S."/>
            <person name="Smith T.M."/>
            <person name="Zhang Q."/>
            <person name="Kapur V."/>
            <person name="Daly J.A."/>
            <person name="Veasy L.G."/>
            <person name="Musser J.M."/>
        </authorList>
    </citation>
    <scope>NUCLEOTIDE SEQUENCE [LARGE SCALE GENOMIC DNA]</scope>
    <source>
        <strain>MGAS8232</strain>
    </source>
</reference>
<protein>
    <recommendedName>
        <fullName evidence="1">Polyribonucleotide nucleotidyltransferase</fullName>
        <ecNumber evidence="1">2.7.7.8</ecNumber>
    </recommendedName>
    <alternativeName>
        <fullName evidence="1">Polynucleotide phosphorylase</fullName>
        <shortName evidence="1">PNPase</shortName>
    </alternativeName>
</protein>
<name>PNP_STRP8</name>
<gene>
    <name evidence="1" type="primary">pnp</name>
    <name type="ordered locus">spyM18_2014</name>
</gene>
<dbReference type="EC" id="2.7.7.8" evidence="1"/>
<dbReference type="EMBL" id="AE009949">
    <property type="protein sequence ID" value="AAL98494.1"/>
    <property type="molecule type" value="Genomic_DNA"/>
</dbReference>
<dbReference type="RefSeq" id="WP_011018235.1">
    <property type="nucleotide sequence ID" value="NC_003485.1"/>
</dbReference>
<dbReference type="SMR" id="Q8NZC6"/>
<dbReference type="KEGG" id="spm:spyM18_2014"/>
<dbReference type="HOGENOM" id="CLU_004217_2_2_9"/>
<dbReference type="GO" id="GO:0005829">
    <property type="term" value="C:cytosol"/>
    <property type="evidence" value="ECO:0007669"/>
    <property type="project" value="TreeGrafter"/>
</dbReference>
<dbReference type="GO" id="GO:0000175">
    <property type="term" value="F:3'-5'-RNA exonuclease activity"/>
    <property type="evidence" value="ECO:0007669"/>
    <property type="project" value="TreeGrafter"/>
</dbReference>
<dbReference type="GO" id="GO:0000287">
    <property type="term" value="F:magnesium ion binding"/>
    <property type="evidence" value="ECO:0007669"/>
    <property type="project" value="UniProtKB-UniRule"/>
</dbReference>
<dbReference type="GO" id="GO:0004654">
    <property type="term" value="F:polyribonucleotide nucleotidyltransferase activity"/>
    <property type="evidence" value="ECO:0007669"/>
    <property type="project" value="UniProtKB-UniRule"/>
</dbReference>
<dbReference type="GO" id="GO:0003723">
    <property type="term" value="F:RNA binding"/>
    <property type="evidence" value="ECO:0007669"/>
    <property type="project" value="UniProtKB-UniRule"/>
</dbReference>
<dbReference type="GO" id="GO:0006402">
    <property type="term" value="P:mRNA catabolic process"/>
    <property type="evidence" value="ECO:0007669"/>
    <property type="project" value="UniProtKB-UniRule"/>
</dbReference>
<dbReference type="GO" id="GO:0006396">
    <property type="term" value="P:RNA processing"/>
    <property type="evidence" value="ECO:0007669"/>
    <property type="project" value="InterPro"/>
</dbReference>
<dbReference type="CDD" id="cd02393">
    <property type="entry name" value="KH-I_PNPase"/>
    <property type="match status" value="1"/>
</dbReference>
<dbReference type="CDD" id="cd11363">
    <property type="entry name" value="RNase_PH_PNPase_1"/>
    <property type="match status" value="1"/>
</dbReference>
<dbReference type="CDD" id="cd11364">
    <property type="entry name" value="RNase_PH_PNPase_2"/>
    <property type="match status" value="1"/>
</dbReference>
<dbReference type="FunFam" id="2.40.50.140:FF:000023">
    <property type="entry name" value="Polyribonucleotide nucleotidyltransferase"/>
    <property type="match status" value="1"/>
</dbReference>
<dbReference type="FunFam" id="3.30.1370.10:FF:000001">
    <property type="entry name" value="Polyribonucleotide nucleotidyltransferase"/>
    <property type="match status" value="1"/>
</dbReference>
<dbReference type="FunFam" id="3.30.230.70:FF:000001">
    <property type="entry name" value="Polyribonucleotide nucleotidyltransferase"/>
    <property type="match status" value="1"/>
</dbReference>
<dbReference type="FunFam" id="3.30.230.70:FF:000002">
    <property type="entry name" value="Polyribonucleotide nucleotidyltransferase"/>
    <property type="match status" value="1"/>
</dbReference>
<dbReference type="Gene3D" id="3.30.230.70">
    <property type="entry name" value="GHMP Kinase, N-terminal domain"/>
    <property type="match status" value="2"/>
</dbReference>
<dbReference type="Gene3D" id="3.30.1370.10">
    <property type="entry name" value="K Homology domain, type 1"/>
    <property type="match status" value="1"/>
</dbReference>
<dbReference type="Gene3D" id="2.40.50.140">
    <property type="entry name" value="Nucleic acid-binding proteins"/>
    <property type="match status" value="1"/>
</dbReference>
<dbReference type="HAMAP" id="MF_01595">
    <property type="entry name" value="PNPase"/>
    <property type="match status" value="1"/>
</dbReference>
<dbReference type="InterPro" id="IPR001247">
    <property type="entry name" value="ExoRNase_PH_dom1"/>
</dbReference>
<dbReference type="InterPro" id="IPR015847">
    <property type="entry name" value="ExoRNase_PH_dom2"/>
</dbReference>
<dbReference type="InterPro" id="IPR036345">
    <property type="entry name" value="ExoRNase_PH_dom2_sf"/>
</dbReference>
<dbReference type="InterPro" id="IPR004087">
    <property type="entry name" value="KH_dom"/>
</dbReference>
<dbReference type="InterPro" id="IPR004088">
    <property type="entry name" value="KH_dom_type_1"/>
</dbReference>
<dbReference type="InterPro" id="IPR036612">
    <property type="entry name" value="KH_dom_type_1_sf"/>
</dbReference>
<dbReference type="InterPro" id="IPR012340">
    <property type="entry name" value="NA-bd_OB-fold"/>
</dbReference>
<dbReference type="InterPro" id="IPR012162">
    <property type="entry name" value="PNPase"/>
</dbReference>
<dbReference type="InterPro" id="IPR027408">
    <property type="entry name" value="PNPase/RNase_PH_dom_sf"/>
</dbReference>
<dbReference type="InterPro" id="IPR015848">
    <property type="entry name" value="PNPase_PH_RNA-bd_bac/org-type"/>
</dbReference>
<dbReference type="InterPro" id="IPR036456">
    <property type="entry name" value="PNPase_PH_RNA-bd_sf"/>
</dbReference>
<dbReference type="InterPro" id="IPR020568">
    <property type="entry name" value="Ribosomal_Su5_D2-typ_SF"/>
</dbReference>
<dbReference type="InterPro" id="IPR003029">
    <property type="entry name" value="S1_domain"/>
</dbReference>
<dbReference type="NCBIfam" id="TIGR03591">
    <property type="entry name" value="polynuc_phos"/>
    <property type="match status" value="1"/>
</dbReference>
<dbReference type="NCBIfam" id="NF008805">
    <property type="entry name" value="PRK11824.1"/>
    <property type="match status" value="1"/>
</dbReference>
<dbReference type="PANTHER" id="PTHR11252">
    <property type="entry name" value="POLYRIBONUCLEOTIDE NUCLEOTIDYLTRANSFERASE"/>
    <property type="match status" value="1"/>
</dbReference>
<dbReference type="PANTHER" id="PTHR11252:SF0">
    <property type="entry name" value="POLYRIBONUCLEOTIDE NUCLEOTIDYLTRANSFERASE 1, MITOCHONDRIAL"/>
    <property type="match status" value="1"/>
</dbReference>
<dbReference type="Pfam" id="PF00013">
    <property type="entry name" value="KH_1"/>
    <property type="match status" value="1"/>
</dbReference>
<dbReference type="Pfam" id="PF03726">
    <property type="entry name" value="PNPase"/>
    <property type="match status" value="1"/>
</dbReference>
<dbReference type="Pfam" id="PF01138">
    <property type="entry name" value="RNase_PH"/>
    <property type="match status" value="2"/>
</dbReference>
<dbReference type="Pfam" id="PF03725">
    <property type="entry name" value="RNase_PH_C"/>
    <property type="match status" value="2"/>
</dbReference>
<dbReference type="Pfam" id="PF00575">
    <property type="entry name" value="S1"/>
    <property type="match status" value="1"/>
</dbReference>
<dbReference type="PIRSF" id="PIRSF005499">
    <property type="entry name" value="PNPase"/>
    <property type="match status" value="1"/>
</dbReference>
<dbReference type="SMART" id="SM00322">
    <property type="entry name" value="KH"/>
    <property type="match status" value="1"/>
</dbReference>
<dbReference type="SMART" id="SM00316">
    <property type="entry name" value="S1"/>
    <property type="match status" value="1"/>
</dbReference>
<dbReference type="SUPFAM" id="SSF54791">
    <property type="entry name" value="Eukaryotic type KH-domain (KH-domain type I)"/>
    <property type="match status" value="1"/>
</dbReference>
<dbReference type="SUPFAM" id="SSF50249">
    <property type="entry name" value="Nucleic acid-binding proteins"/>
    <property type="match status" value="1"/>
</dbReference>
<dbReference type="SUPFAM" id="SSF46915">
    <property type="entry name" value="Polynucleotide phosphorylase/guanosine pentaphosphate synthase (PNPase/GPSI), domain 3"/>
    <property type="match status" value="1"/>
</dbReference>
<dbReference type="SUPFAM" id="SSF55666">
    <property type="entry name" value="Ribonuclease PH domain 2-like"/>
    <property type="match status" value="2"/>
</dbReference>
<dbReference type="SUPFAM" id="SSF54211">
    <property type="entry name" value="Ribosomal protein S5 domain 2-like"/>
    <property type="match status" value="2"/>
</dbReference>
<dbReference type="PROSITE" id="PS50084">
    <property type="entry name" value="KH_TYPE_1"/>
    <property type="match status" value="1"/>
</dbReference>
<dbReference type="PROSITE" id="PS50126">
    <property type="entry name" value="S1"/>
    <property type="match status" value="1"/>
</dbReference>
<sequence>MSKQTFTTTFAGKPLVVEVGQVAKQANGATVVRYGESTVLTAAVMSKKMATGDFFPLQVNYEEKMYAAGKFPGGFMKREGRPSTDATLTARLIDRPIRPMFAEGFRNEVQVINTVLSYDENASAPMAAMFGSSLALSISDIPFNGPIAGVQVGYIDGEFIINPDKEQMEASLLELTVAGSKEAINMVESGAKELSEDIMLEALLKGHQAIQELIAFQEQIVAVVGKEKAEVELLQVDADLQADIVAKYNAQLQKAVQVEEKKAREAATEAVKEMVKAEYEERYAEDENLATIMRDVAEILEQMEHAEVRRLITEDKIRPDGRKIDEIRPLDAVVDFLPKVHGSGLFTRGQTQALSVLTLAPMGETQIIDGLAPEYKKSFLHHYNFPQYSVGETGRYGAAGRREIGHGALGERALEQVLPSLEEFPYAIRLVAEVLESNGSSSQASICAGTLALMAGGVPIKAPVAGIAMGLISDGTNYTVLTDIQGLEDHFGDMDFKVAGTREGITALQMDIKIAGITPQILEEALAQAKKARFEILDVIEATIAEPRPELAPTAPKIDTIKIDVDKIKVVIGKGGETIDKIIAETGVKIDIDDEGNVSIYSSDQAAIDRTKEIIAGLVREAKVGEVYHAKVIRIEKFGAFVNLFDKTDALVHISEIAWTRTTNVSDVLEVGEDVDVKVIKIDEKGRVDASMKALIPRPPKPEKKEEKHD</sequence>
<organism>
    <name type="scientific">Streptococcus pyogenes serotype M18 (strain MGAS8232)</name>
    <dbReference type="NCBI Taxonomy" id="186103"/>
    <lineage>
        <taxon>Bacteria</taxon>
        <taxon>Bacillati</taxon>
        <taxon>Bacillota</taxon>
        <taxon>Bacilli</taxon>
        <taxon>Lactobacillales</taxon>
        <taxon>Streptococcaceae</taxon>
        <taxon>Streptococcus</taxon>
    </lineage>
</organism>
<accession>Q8NZC6</accession>
<proteinExistence type="inferred from homology"/>
<evidence type="ECO:0000255" key="1">
    <source>
        <dbReference type="HAMAP-Rule" id="MF_01595"/>
    </source>
</evidence>
<evidence type="ECO:0000256" key="2">
    <source>
        <dbReference type="SAM" id="MobiDB-lite"/>
    </source>
</evidence>
<comment type="function">
    <text evidence="1">Involved in mRNA degradation. Catalyzes the phosphorolysis of single-stranded polyribonucleotides processively in the 3'- to 5'-direction.</text>
</comment>
<comment type="catalytic activity">
    <reaction evidence="1">
        <text>RNA(n+1) + phosphate = RNA(n) + a ribonucleoside 5'-diphosphate</text>
        <dbReference type="Rhea" id="RHEA:22096"/>
        <dbReference type="Rhea" id="RHEA-COMP:14527"/>
        <dbReference type="Rhea" id="RHEA-COMP:17342"/>
        <dbReference type="ChEBI" id="CHEBI:43474"/>
        <dbReference type="ChEBI" id="CHEBI:57930"/>
        <dbReference type="ChEBI" id="CHEBI:140395"/>
        <dbReference type="EC" id="2.7.7.8"/>
    </reaction>
</comment>
<comment type="cofactor">
    <cofactor evidence="1">
        <name>Mg(2+)</name>
        <dbReference type="ChEBI" id="CHEBI:18420"/>
    </cofactor>
</comment>
<comment type="subcellular location">
    <subcellularLocation>
        <location evidence="1">Cytoplasm</location>
    </subcellularLocation>
</comment>
<comment type="similarity">
    <text evidence="1">Belongs to the polyribonucleotide nucleotidyltransferase family.</text>
</comment>
<keyword id="KW-0963">Cytoplasm</keyword>
<keyword id="KW-0460">Magnesium</keyword>
<keyword id="KW-0479">Metal-binding</keyword>
<keyword id="KW-0548">Nucleotidyltransferase</keyword>
<keyword id="KW-0694">RNA-binding</keyword>
<keyword id="KW-0808">Transferase</keyword>
<feature type="chain" id="PRO_0000329875" description="Polyribonucleotide nucleotidyltransferase">
    <location>
        <begin position="1"/>
        <end position="710"/>
    </location>
</feature>
<feature type="domain" description="KH" evidence="1">
    <location>
        <begin position="556"/>
        <end position="615"/>
    </location>
</feature>
<feature type="domain" description="S1 motif" evidence="1">
    <location>
        <begin position="625"/>
        <end position="693"/>
    </location>
</feature>
<feature type="region of interest" description="Disordered" evidence="2">
    <location>
        <begin position="691"/>
        <end position="710"/>
    </location>
</feature>
<feature type="compositionally biased region" description="Basic and acidic residues" evidence="2">
    <location>
        <begin position="700"/>
        <end position="710"/>
    </location>
</feature>
<feature type="binding site" evidence="1">
    <location>
        <position position="489"/>
    </location>
    <ligand>
        <name>Mg(2+)</name>
        <dbReference type="ChEBI" id="CHEBI:18420"/>
    </ligand>
</feature>
<feature type="binding site" evidence="1">
    <location>
        <position position="495"/>
    </location>
    <ligand>
        <name>Mg(2+)</name>
        <dbReference type="ChEBI" id="CHEBI:18420"/>
    </ligand>
</feature>